<sequence length="284" mass="32680">MNAWNTIYDQFNPIAFSLGSIEVHWYGLAYACAIVVAFYMALRMIQKDPKRFPIERKEFESYFLWAELGIVLGARVGYILIYEPNSSYYLTHFWQIFNPFDSHGNFVGIRGMSYHGGLVGFLIASYLYSRKDLKKLLIYLDLIAISLPLGYVFGRIGNFLNQELVGRIVPKDSHLGQIIGIMVDHQLRYPSQLIEAFLEGVIVFLMVMWAKKHTKTHGLLIVVYGLGYSLMRFIAEFYREPDSQMGVYFLNLSMGQILSLFMVIVSLGILLYATKNSKKIKENQ</sequence>
<protein>
    <recommendedName>
        <fullName evidence="1">Phosphatidylglycerol--prolipoprotein diacylglyceryl transferase</fullName>
        <ecNumber evidence="1">2.5.1.145</ecNumber>
    </recommendedName>
</protein>
<reference key="1">
    <citation type="submission" date="2008-10" db="EMBL/GenBank/DDBJ databases">
        <title>The complete genome sequence of Helicobacter pylori strain P12.</title>
        <authorList>
            <person name="Fischer W."/>
            <person name="Windhager L."/>
            <person name="Karnholz A."/>
            <person name="Zeiller M."/>
            <person name="Zimmer R."/>
            <person name="Haas R."/>
        </authorList>
    </citation>
    <scope>NUCLEOTIDE SEQUENCE [LARGE SCALE GENOMIC DNA]</scope>
    <source>
        <strain>P12</strain>
    </source>
</reference>
<feature type="chain" id="PRO_1000137432" description="Phosphatidylglycerol--prolipoprotein diacylglyceryl transferase">
    <location>
        <begin position="1"/>
        <end position="284"/>
    </location>
</feature>
<feature type="transmembrane region" description="Helical" evidence="1">
    <location>
        <begin position="21"/>
        <end position="41"/>
    </location>
</feature>
<feature type="transmembrane region" description="Helical" evidence="1">
    <location>
        <begin position="62"/>
        <end position="82"/>
    </location>
</feature>
<feature type="transmembrane region" description="Helical" evidence="1">
    <location>
        <begin position="106"/>
        <end position="126"/>
    </location>
</feature>
<feature type="transmembrane region" description="Helical" evidence="1">
    <location>
        <begin position="136"/>
        <end position="156"/>
    </location>
</feature>
<feature type="transmembrane region" description="Helical" evidence="1">
    <location>
        <begin position="190"/>
        <end position="210"/>
    </location>
</feature>
<feature type="transmembrane region" description="Helical" evidence="1">
    <location>
        <begin position="218"/>
        <end position="238"/>
    </location>
</feature>
<feature type="transmembrane region" description="Helical" evidence="1">
    <location>
        <begin position="252"/>
        <end position="272"/>
    </location>
</feature>
<feature type="binding site" evidence="1">
    <location>
        <position position="155"/>
    </location>
    <ligand>
        <name>a 1,2-diacyl-sn-glycero-3-phospho-(1'-sn-glycerol)</name>
        <dbReference type="ChEBI" id="CHEBI:64716"/>
    </ligand>
</feature>
<keyword id="KW-0997">Cell inner membrane</keyword>
<keyword id="KW-1003">Cell membrane</keyword>
<keyword id="KW-0472">Membrane</keyword>
<keyword id="KW-0808">Transferase</keyword>
<keyword id="KW-0812">Transmembrane</keyword>
<keyword id="KW-1133">Transmembrane helix</keyword>
<comment type="function">
    <text evidence="1">Catalyzes the transfer of the diacylglyceryl group from phosphatidylglycerol to the sulfhydryl group of the N-terminal cysteine of a prolipoprotein, the first step in the formation of mature lipoproteins.</text>
</comment>
<comment type="catalytic activity">
    <reaction evidence="1">
        <text>L-cysteinyl-[prolipoprotein] + a 1,2-diacyl-sn-glycero-3-phospho-(1'-sn-glycerol) = an S-1,2-diacyl-sn-glyceryl-L-cysteinyl-[prolipoprotein] + sn-glycerol 1-phosphate + H(+)</text>
        <dbReference type="Rhea" id="RHEA:56712"/>
        <dbReference type="Rhea" id="RHEA-COMP:14679"/>
        <dbReference type="Rhea" id="RHEA-COMP:14680"/>
        <dbReference type="ChEBI" id="CHEBI:15378"/>
        <dbReference type="ChEBI" id="CHEBI:29950"/>
        <dbReference type="ChEBI" id="CHEBI:57685"/>
        <dbReference type="ChEBI" id="CHEBI:64716"/>
        <dbReference type="ChEBI" id="CHEBI:140658"/>
        <dbReference type="EC" id="2.5.1.145"/>
    </reaction>
</comment>
<comment type="pathway">
    <text evidence="1">Protein modification; lipoprotein biosynthesis (diacylglyceryl transfer).</text>
</comment>
<comment type="subcellular location">
    <subcellularLocation>
        <location evidence="1">Cell inner membrane</location>
        <topology evidence="1">Multi-pass membrane protein</topology>
    </subcellularLocation>
</comment>
<comment type="similarity">
    <text evidence="1">Belongs to the Lgt family.</text>
</comment>
<name>LGT_HELP2</name>
<gene>
    <name evidence="1" type="primary">lgt</name>
    <name type="ordered locus">HPP12_0951</name>
</gene>
<proteinExistence type="inferred from homology"/>
<evidence type="ECO:0000255" key="1">
    <source>
        <dbReference type="HAMAP-Rule" id="MF_01147"/>
    </source>
</evidence>
<dbReference type="EC" id="2.5.1.145" evidence="1"/>
<dbReference type="EMBL" id="CP001217">
    <property type="protein sequence ID" value="ACJ08103.1"/>
    <property type="molecule type" value="Genomic_DNA"/>
</dbReference>
<dbReference type="SMR" id="B6JMH5"/>
<dbReference type="KEGG" id="hpp:HPP12_0951"/>
<dbReference type="HOGENOM" id="CLU_013386_1_0_7"/>
<dbReference type="UniPathway" id="UPA00664"/>
<dbReference type="Proteomes" id="UP000008198">
    <property type="component" value="Chromosome"/>
</dbReference>
<dbReference type="GO" id="GO:0005886">
    <property type="term" value="C:plasma membrane"/>
    <property type="evidence" value="ECO:0007669"/>
    <property type="project" value="UniProtKB-SubCell"/>
</dbReference>
<dbReference type="GO" id="GO:0008961">
    <property type="term" value="F:phosphatidylglycerol-prolipoprotein diacylglyceryl transferase activity"/>
    <property type="evidence" value="ECO:0007669"/>
    <property type="project" value="UniProtKB-UniRule"/>
</dbReference>
<dbReference type="GO" id="GO:0042158">
    <property type="term" value="P:lipoprotein biosynthetic process"/>
    <property type="evidence" value="ECO:0007669"/>
    <property type="project" value="UniProtKB-UniRule"/>
</dbReference>
<dbReference type="HAMAP" id="MF_01147">
    <property type="entry name" value="Lgt"/>
    <property type="match status" value="1"/>
</dbReference>
<dbReference type="InterPro" id="IPR001640">
    <property type="entry name" value="Lgt"/>
</dbReference>
<dbReference type="NCBIfam" id="TIGR00544">
    <property type="entry name" value="lgt"/>
    <property type="match status" value="1"/>
</dbReference>
<dbReference type="PANTHER" id="PTHR30589:SF0">
    <property type="entry name" value="PHOSPHATIDYLGLYCEROL--PROLIPOPROTEIN DIACYLGLYCERYL TRANSFERASE"/>
    <property type="match status" value="1"/>
</dbReference>
<dbReference type="PANTHER" id="PTHR30589">
    <property type="entry name" value="PROLIPOPROTEIN DIACYLGLYCERYL TRANSFERASE"/>
    <property type="match status" value="1"/>
</dbReference>
<dbReference type="Pfam" id="PF01790">
    <property type="entry name" value="LGT"/>
    <property type="match status" value="1"/>
</dbReference>
<dbReference type="PROSITE" id="PS01311">
    <property type="entry name" value="LGT"/>
    <property type="match status" value="1"/>
</dbReference>
<organism>
    <name type="scientific">Helicobacter pylori (strain P12)</name>
    <dbReference type="NCBI Taxonomy" id="570508"/>
    <lineage>
        <taxon>Bacteria</taxon>
        <taxon>Pseudomonadati</taxon>
        <taxon>Campylobacterota</taxon>
        <taxon>Epsilonproteobacteria</taxon>
        <taxon>Campylobacterales</taxon>
        <taxon>Helicobacteraceae</taxon>
        <taxon>Helicobacter</taxon>
    </lineage>
</organism>
<accession>B6JMH5</accession>